<comment type="function">
    <text evidence="1">Involved in transcription antitermination. Required for transcription of ribosomal RNA (rRNA) genes. Binds specifically to the boxA antiterminator sequence of the ribosomal RNA (rrn) operons.</text>
</comment>
<comment type="similarity">
    <text evidence="1">Belongs to the NusB family.</text>
</comment>
<keyword id="KW-0694">RNA-binding</keyword>
<keyword id="KW-0804">Transcription</keyword>
<keyword id="KW-0889">Transcription antitermination</keyword>
<keyword id="KW-0805">Transcription regulation</keyword>
<organism>
    <name type="scientific">Escherichia coli O9:H4 (strain HS)</name>
    <dbReference type="NCBI Taxonomy" id="331112"/>
    <lineage>
        <taxon>Bacteria</taxon>
        <taxon>Pseudomonadati</taxon>
        <taxon>Pseudomonadota</taxon>
        <taxon>Gammaproteobacteria</taxon>
        <taxon>Enterobacterales</taxon>
        <taxon>Enterobacteriaceae</taxon>
        <taxon>Escherichia</taxon>
    </lineage>
</organism>
<protein>
    <recommendedName>
        <fullName evidence="1">Transcription antitermination protein NusB</fullName>
    </recommendedName>
    <alternativeName>
        <fullName evidence="1">Antitermination factor NusB</fullName>
    </alternativeName>
</protein>
<sequence>MKPAARRRARECAVQALYSWQLSQNDIADVEYQFLAEQDVKDVDVLYFRELLAGVATNTAYLDGLMKPYLSRLLEELGQVEKAVLRIALYELSKRSDVPYKVAINEAIELAKSFGAEDSHKFVNGVLDKAAPVIRPNKK</sequence>
<name>NUSB_ECOHS</name>
<reference key="1">
    <citation type="journal article" date="2008" name="J. Bacteriol.">
        <title>The pangenome structure of Escherichia coli: comparative genomic analysis of E. coli commensal and pathogenic isolates.</title>
        <authorList>
            <person name="Rasko D.A."/>
            <person name="Rosovitz M.J."/>
            <person name="Myers G.S.A."/>
            <person name="Mongodin E.F."/>
            <person name="Fricke W.F."/>
            <person name="Gajer P."/>
            <person name="Crabtree J."/>
            <person name="Sebaihia M."/>
            <person name="Thomson N.R."/>
            <person name="Chaudhuri R."/>
            <person name="Henderson I.R."/>
            <person name="Sperandio V."/>
            <person name="Ravel J."/>
        </authorList>
    </citation>
    <scope>NUCLEOTIDE SEQUENCE [LARGE SCALE GENOMIC DNA]</scope>
    <source>
        <strain>HS</strain>
    </source>
</reference>
<accession>A7ZX68</accession>
<dbReference type="EMBL" id="CP000802">
    <property type="protein sequence ID" value="ABV04872.1"/>
    <property type="molecule type" value="Genomic_DNA"/>
</dbReference>
<dbReference type="RefSeq" id="WP_000801125.1">
    <property type="nucleotide sequence ID" value="NC_009800.1"/>
</dbReference>
<dbReference type="BMRB" id="A7ZX68"/>
<dbReference type="SMR" id="A7ZX68"/>
<dbReference type="GeneID" id="93777044"/>
<dbReference type="KEGG" id="ecx:EcHS_A0487"/>
<dbReference type="HOGENOM" id="CLU_087843_4_1_6"/>
<dbReference type="GO" id="GO:0005829">
    <property type="term" value="C:cytosol"/>
    <property type="evidence" value="ECO:0007669"/>
    <property type="project" value="TreeGrafter"/>
</dbReference>
<dbReference type="GO" id="GO:0003723">
    <property type="term" value="F:RNA binding"/>
    <property type="evidence" value="ECO:0007669"/>
    <property type="project" value="UniProtKB-UniRule"/>
</dbReference>
<dbReference type="GO" id="GO:0006353">
    <property type="term" value="P:DNA-templated transcription termination"/>
    <property type="evidence" value="ECO:0007669"/>
    <property type="project" value="UniProtKB-UniRule"/>
</dbReference>
<dbReference type="GO" id="GO:0031564">
    <property type="term" value="P:transcription antitermination"/>
    <property type="evidence" value="ECO:0007669"/>
    <property type="project" value="UniProtKB-KW"/>
</dbReference>
<dbReference type="CDD" id="cd00619">
    <property type="entry name" value="Terminator_NusB"/>
    <property type="match status" value="1"/>
</dbReference>
<dbReference type="FunFam" id="1.10.940.10:FF:000001">
    <property type="entry name" value="Transcription antitermination factor NusB"/>
    <property type="match status" value="1"/>
</dbReference>
<dbReference type="Gene3D" id="1.10.940.10">
    <property type="entry name" value="NusB-like"/>
    <property type="match status" value="1"/>
</dbReference>
<dbReference type="HAMAP" id="MF_00073">
    <property type="entry name" value="NusB"/>
    <property type="match status" value="1"/>
</dbReference>
<dbReference type="InterPro" id="IPR035926">
    <property type="entry name" value="NusB-like_sf"/>
</dbReference>
<dbReference type="InterPro" id="IPR011605">
    <property type="entry name" value="NusB_fam"/>
</dbReference>
<dbReference type="InterPro" id="IPR006027">
    <property type="entry name" value="NusB_RsmB_TIM44"/>
</dbReference>
<dbReference type="NCBIfam" id="TIGR01951">
    <property type="entry name" value="nusB"/>
    <property type="match status" value="1"/>
</dbReference>
<dbReference type="PANTHER" id="PTHR11078:SF3">
    <property type="entry name" value="ANTITERMINATION NUSB DOMAIN-CONTAINING PROTEIN"/>
    <property type="match status" value="1"/>
</dbReference>
<dbReference type="PANTHER" id="PTHR11078">
    <property type="entry name" value="N UTILIZATION SUBSTANCE PROTEIN B-RELATED"/>
    <property type="match status" value="1"/>
</dbReference>
<dbReference type="Pfam" id="PF01029">
    <property type="entry name" value="NusB"/>
    <property type="match status" value="1"/>
</dbReference>
<dbReference type="SUPFAM" id="SSF48013">
    <property type="entry name" value="NusB-like"/>
    <property type="match status" value="1"/>
</dbReference>
<proteinExistence type="inferred from homology"/>
<feature type="chain" id="PRO_1000057496" description="Transcription antitermination protein NusB">
    <location>
        <begin position="1"/>
        <end position="139"/>
    </location>
</feature>
<gene>
    <name evidence="1" type="primary">nusB</name>
    <name type="ordered locus">EcHS_A0487</name>
</gene>
<evidence type="ECO:0000255" key="1">
    <source>
        <dbReference type="HAMAP-Rule" id="MF_00073"/>
    </source>
</evidence>